<keyword id="KW-0997">Cell inner membrane</keyword>
<keyword id="KW-1003">Cell membrane</keyword>
<keyword id="KW-0143">Chaperone</keyword>
<keyword id="KW-0472">Membrane</keyword>
<keyword id="KW-0653">Protein transport</keyword>
<keyword id="KW-1185">Reference proteome</keyword>
<keyword id="KW-0812">Transmembrane</keyword>
<keyword id="KW-1133">Transmembrane helix</keyword>
<keyword id="KW-0813">Transport</keyword>
<evidence type="ECO:0000255" key="1">
    <source>
        <dbReference type="HAMAP-Rule" id="MF_01810"/>
    </source>
</evidence>
<accession>Q5LW11</accession>
<dbReference type="EMBL" id="CP000031">
    <property type="protein sequence ID" value="AAV93849.1"/>
    <property type="molecule type" value="Genomic_DNA"/>
</dbReference>
<dbReference type="RefSeq" id="WP_011046291.1">
    <property type="nucleotide sequence ID" value="NC_003911.12"/>
</dbReference>
<dbReference type="SMR" id="Q5LW11"/>
<dbReference type="STRING" id="246200.SPO0532"/>
<dbReference type="PaxDb" id="246200-SPO0532"/>
<dbReference type="KEGG" id="sil:SPO0532"/>
<dbReference type="eggNOG" id="COG0706">
    <property type="taxonomic scope" value="Bacteria"/>
</dbReference>
<dbReference type="HOGENOM" id="CLU_016535_1_0_5"/>
<dbReference type="OrthoDB" id="9780552at2"/>
<dbReference type="Proteomes" id="UP000001023">
    <property type="component" value="Chromosome"/>
</dbReference>
<dbReference type="GO" id="GO:0005886">
    <property type="term" value="C:plasma membrane"/>
    <property type="evidence" value="ECO:0007669"/>
    <property type="project" value="UniProtKB-SubCell"/>
</dbReference>
<dbReference type="GO" id="GO:0032977">
    <property type="term" value="F:membrane insertase activity"/>
    <property type="evidence" value="ECO:0007669"/>
    <property type="project" value="InterPro"/>
</dbReference>
<dbReference type="GO" id="GO:0051205">
    <property type="term" value="P:protein insertion into membrane"/>
    <property type="evidence" value="ECO:0007669"/>
    <property type="project" value="TreeGrafter"/>
</dbReference>
<dbReference type="GO" id="GO:0015031">
    <property type="term" value="P:protein transport"/>
    <property type="evidence" value="ECO:0007669"/>
    <property type="project" value="UniProtKB-KW"/>
</dbReference>
<dbReference type="CDD" id="cd20070">
    <property type="entry name" value="5TM_YidC_Alb3"/>
    <property type="match status" value="1"/>
</dbReference>
<dbReference type="CDD" id="cd19961">
    <property type="entry name" value="EcYidC-like_peri"/>
    <property type="match status" value="1"/>
</dbReference>
<dbReference type="FunFam" id="2.70.98.90:FF:000006">
    <property type="entry name" value="Membrane protein insertase YidC"/>
    <property type="match status" value="1"/>
</dbReference>
<dbReference type="Gene3D" id="2.70.98.90">
    <property type="match status" value="1"/>
</dbReference>
<dbReference type="HAMAP" id="MF_01810">
    <property type="entry name" value="YidC_type1"/>
    <property type="match status" value="1"/>
</dbReference>
<dbReference type="InterPro" id="IPR019998">
    <property type="entry name" value="Membr_insert_YidC"/>
</dbReference>
<dbReference type="InterPro" id="IPR028053">
    <property type="entry name" value="Membr_insert_YidC_N"/>
</dbReference>
<dbReference type="InterPro" id="IPR001708">
    <property type="entry name" value="YidC/ALB3/OXA1/COX18"/>
</dbReference>
<dbReference type="InterPro" id="IPR028055">
    <property type="entry name" value="YidC/Oxa/ALB_C"/>
</dbReference>
<dbReference type="InterPro" id="IPR047196">
    <property type="entry name" value="YidC_ALB_C"/>
</dbReference>
<dbReference type="InterPro" id="IPR038221">
    <property type="entry name" value="YidC_periplasmic_sf"/>
</dbReference>
<dbReference type="NCBIfam" id="NF002353">
    <property type="entry name" value="PRK01318.1-4"/>
    <property type="match status" value="1"/>
</dbReference>
<dbReference type="NCBIfam" id="TIGR03593">
    <property type="entry name" value="yidC_nterm"/>
    <property type="match status" value="1"/>
</dbReference>
<dbReference type="NCBIfam" id="TIGR03592">
    <property type="entry name" value="yidC_oxa1_cterm"/>
    <property type="match status" value="1"/>
</dbReference>
<dbReference type="PANTHER" id="PTHR12428:SF65">
    <property type="entry name" value="CYTOCHROME C OXIDASE ASSEMBLY PROTEIN COX18, MITOCHONDRIAL"/>
    <property type="match status" value="1"/>
</dbReference>
<dbReference type="PANTHER" id="PTHR12428">
    <property type="entry name" value="OXA1"/>
    <property type="match status" value="1"/>
</dbReference>
<dbReference type="Pfam" id="PF02096">
    <property type="entry name" value="60KD_IMP"/>
    <property type="match status" value="1"/>
</dbReference>
<dbReference type="Pfam" id="PF14849">
    <property type="entry name" value="YidC_periplas"/>
    <property type="match status" value="1"/>
</dbReference>
<dbReference type="PRINTS" id="PR00701">
    <property type="entry name" value="60KDINNERMP"/>
</dbReference>
<dbReference type="PRINTS" id="PR01900">
    <property type="entry name" value="YIDCPROTEIN"/>
</dbReference>
<protein>
    <recommendedName>
        <fullName evidence="1">Membrane protein insertase YidC</fullName>
    </recommendedName>
    <alternativeName>
        <fullName evidence="1">Foldase YidC</fullName>
    </alternativeName>
    <alternativeName>
        <fullName evidence="1">Membrane integrase YidC</fullName>
    </alternativeName>
    <alternativeName>
        <fullName evidence="1">Membrane protein YidC</fullName>
    </alternativeName>
</protein>
<organism>
    <name type="scientific">Ruegeria pomeroyi (strain ATCC 700808 / DSM 15171 / DSS-3)</name>
    <name type="common">Silicibacter pomeroyi</name>
    <dbReference type="NCBI Taxonomy" id="246200"/>
    <lineage>
        <taxon>Bacteria</taxon>
        <taxon>Pseudomonadati</taxon>
        <taxon>Pseudomonadota</taxon>
        <taxon>Alphaproteobacteria</taxon>
        <taxon>Rhodobacterales</taxon>
        <taxon>Roseobacteraceae</taxon>
        <taxon>Ruegeria</taxon>
    </lineage>
</organism>
<gene>
    <name evidence="1" type="primary">yidC</name>
    <name type="ordered locus">SPO0532</name>
</gene>
<feature type="chain" id="PRO_1000070179" description="Membrane protein insertase YidC">
    <location>
        <begin position="1"/>
        <end position="609"/>
    </location>
</feature>
<feature type="transmembrane region" description="Helical" evidence="1">
    <location>
        <begin position="8"/>
        <end position="28"/>
    </location>
</feature>
<feature type="transmembrane region" description="Helical" evidence="1">
    <location>
        <begin position="381"/>
        <end position="401"/>
    </location>
</feature>
<feature type="transmembrane region" description="Helical" evidence="1">
    <location>
        <begin position="451"/>
        <end position="471"/>
    </location>
</feature>
<feature type="transmembrane region" description="Helical" evidence="1">
    <location>
        <begin position="509"/>
        <end position="529"/>
    </location>
</feature>
<feature type="transmembrane region" description="Helical" evidence="1">
    <location>
        <begin position="545"/>
        <end position="565"/>
    </location>
</feature>
<comment type="function">
    <text evidence="1">Required for the insertion and/or proper folding and/or complex formation of integral membrane proteins into the membrane. Involved in integration of membrane proteins that insert both dependently and independently of the Sec translocase complex, as well as at least some lipoproteins. Aids folding of multispanning membrane proteins.</text>
</comment>
<comment type="subunit">
    <text evidence="1">Interacts with the Sec translocase complex via SecD. Specifically interacts with transmembrane segments of nascent integral membrane proteins during membrane integration.</text>
</comment>
<comment type="subcellular location">
    <subcellularLocation>
        <location evidence="1">Cell inner membrane</location>
        <topology evidence="1">Multi-pass membrane protein</topology>
    </subcellularLocation>
</comment>
<comment type="similarity">
    <text evidence="1">Belongs to the OXA1/ALB3/YidC family. Type 1 subfamily.</text>
</comment>
<reference key="1">
    <citation type="journal article" date="2004" name="Nature">
        <title>Genome sequence of Silicibacter pomeroyi reveals adaptations to the marine environment.</title>
        <authorList>
            <person name="Moran M.A."/>
            <person name="Buchan A."/>
            <person name="Gonzalez J.M."/>
            <person name="Heidelberg J.F."/>
            <person name="Whitman W.B."/>
            <person name="Kiene R.P."/>
            <person name="Henriksen J.R."/>
            <person name="King G.M."/>
            <person name="Belas R."/>
            <person name="Fuqua C."/>
            <person name="Brinkac L.M."/>
            <person name="Lewis M."/>
            <person name="Johri S."/>
            <person name="Weaver B."/>
            <person name="Pai G."/>
            <person name="Eisen J.A."/>
            <person name="Rahe E."/>
            <person name="Sheldon W.M."/>
            <person name="Ye W."/>
            <person name="Miller T.R."/>
            <person name="Carlton J."/>
            <person name="Rasko D.A."/>
            <person name="Paulsen I.T."/>
            <person name="Ren Q."/>
            <person name="Daugherty S.C."/>
            <person name="DeBoy R.T."/>
            <person name="Dodson R.J."/>
            <person name="Durkin A.S."/>
            <person name="Madupu R."/>
            <person name="Nelson W.C."/>
            <person name="Sullivan S.A."/>
            <person name="Rosovitz M.J."/>
            <person name="Haft D.H."/>
            <person name="Selengut J."/>
            <person name="Ward N."/>
        </authorList>
    </citation>
    <scope>NUCLEOTIDE SEQUENCE [LARGE SCALE GENOMIC DNA]</scope>
    <source>
        <strain>ATCC 700808 / DSM 15171 / DSS-3</strain>
    </source>
</reference>
<reference key="2">
    <citation type="journal article" date="2014" name="Stand. Genomic Sci.">
        <title>An updated genome annotation for the model marine bacterium Ruegeria pomeroyi DSS-3.</title>
        <authorList>
            <person name="Rivers A.R."/>
            <person name="Smith C.B."/>
            <person name="Moran M.A."/>
        </authorList>
    </citation>
    <scope>GENOME REANNOTATION</scope>
    <source>
        <strain>ATCC 700808 / DSM 15171 / DSS-3</strain>
    </source>
</reference>
<sequence>MDDQNKNLILATALSFLVILVWFILFPPPEQTEAPATEIATTNGTAVQTPTAAATEGGAGEVPALDSAAPTQAEAPRVQIDTPRLKGSVSLLGGRIDELSLKDYRVSLDEDAEIVEMLTPAGSTSAYYALYGWAPGAGLNAADVPGPLTEWSLESGDTLSVGTPVTLSWSNGSGVTFRRTLAVDEDYMFTVTQSVENGSAAPIGAAPYGILARHGIGEDADLPGLKNFFILHEGVVAMNDGTLSEIDYKDVRKFDIDPNEGAQAEVFQNKSDGWIGFTDHYWMATLIPGSGTAFKSAAKYDARRKIYQAETVLPTMSVAPGESAEVTTRLFAGAKEWESIRAYQQDGVQKFLDSIDWGWFFFLTKPIFWLLHQINGLIGNMGWSIIGLTLIIKAIVFPLALKSYVSMAKMKELQPQMEALKEAAGDDRQKMQQGMMELYKKEKVNPAAGCLPILLQIPIFFSLYKVIFVTIELRQAPWFGPFRDLSMPDPTSIMNFFGWLPWAGPEAGSLTATILIGILPLLLGISMWLQQKLNPAPTDPTQAMIFAWMPWVFMFMLGSFASGLVVYWIANNTITFTQQYIIMRSHGYKPDVFGNIKSGFARRAKADKK</sequence>
<name>YIDC_RUEPO</name>
<proteinExistence type="inferred from homology"/>